<organism>
    <name type="scientific">Shewanella baltica (strain OS185)</name>
    <dbReference type="NCBI Taxonomy" id="402882"/>
    <lineage>
        <taxon>Bacteria</taxon>
        <taxon>Pseudomonadati</taxon>
        <taxon>Pseudomonadota</taxon>
        <taxon>Gammaproteobacteria</taxon>
        <taxon>Alteromonadales</taxon>
        <taxon>Shewanellaceae</taxon>
        <taxon>Shewanella</taxon>
    </lineage>
</organism>
<reference key="1">
    <citation type="submission" date="2007-07" db="EMBL/GenBank/DDBJ databases">
        <title>Complete sequence of chromosome of Shewanella baltica OS185.</title>
        <authorList>
            <consortium name="US DOE Joint Genome Institute"/>
            <person name="Copeland A."/>
            <person name="Lucas S."/>
            <person name="Lapidus A."/>
            <person name="Barry K."/>
            <person name="Glavina del Rio T."/>
            <person name="Dalin E."/>
            <person name="Tice H."/>
            <person name="Pitluck S."/>
            <person name="Sims D."/>
            <person name="Brettin T."/>
            <person name="Bruce D."/>
            <person name="Detter J.C."/>
            <person name="Han C."/>
            <person name="Schmutz J."/>
            <person name="Larimer F."/>
            <person name="Land M."/>
            <person name="Hauser L."/>
            <person name="Kyrpides N."/>
            <person name="Mikhailova N."/>
            <person name="Brettar I."/>
            <person name="Rodrigues J."/>
            <person name="Konstantinidis K."/>
            <person name="Tiedje J."/>
            <person name="Richardson P."/>
        </authorList>
    </citation>
    <scope>NUCLEOTIDE SEQUENCE [LARGE SCALE GENOMIC DNA]</scope>
    <source>
        <strain>OS185</strain>
    </source>
</reference>
<name>RL14_SHEB8</name>
<evidence type="ECO:0000255" key="1">
    <source>
        <dbReference type="HAMAP-Rule" id="MF_01367"/>
    </source>
</evidence>
<evidence type="ECO:0000305" key="2"/>
<dbReference type="EMBL" id="CP000753">
    <property type="protein sequence ID" value="ABS06377.1"/>
    <property type="molecule type" value="Genomic_DNA"/>
</dbReference>
<dbReference type="RefSeq" id="WP_006083590.1">
    <property type="nucleotide sequence ID" value="NC_009665.1"/>
</dbReference>
<dbReference type="SMR" id="A6WHT8"/>
<dbReference type="GeneID" id="75190608"/>
<dbReference type="KEGG" id="sbm:Shew185_0206"/>
<dbReference type="HOGENOM" id="CLU_095071_2_1_6"/>
<dbReference type="GO" id="GO:0022625">
    <property type="term" value="C:cytosolic large ribosomal subunit"/>
    <property type="evidence" value="ECO:0007669"/>
    <property type="project" value="TreeGrafter"/>
</dbReference>
<dbReference type="GO" id="GO:0070180">
    <property type="term" value="F:large ribosomal subunit rRNA binding"/>
    <property type="evidence" value="ECO:0007669"/>
    <property type="project" value="TreeGrafter"/>
</dbReference>
<dbReference type="GO" id="GO:0003735">
    <property type="term" value="F:structural constituent of ribosome"/>
    <property type="evidence" value="ECO:0007669"/>
    <property type="project" value="InterPro"/>
</dbReference>
<dbReference type="GO" id="GO:0006412">
    <property type="term" value="P:translation"/>
    <property type="evidence" value="ECO:0007669"/>
    <property type="project" value="UniProtKB-UniRule"/>
</dbReference>
<dbReference type="CDD" id="cd00337">
    <property type="entry name" value="Ribosomal_uL14"/>
    <property type="match status" value="1"/>
</dbReference>
<dbReference type="FunFam" id="2.40.150.20:FF:000001">
    <property type="entry name" value="50S ribosomal protein L14"/>
    <property type="match status" value="1"/>
</dbReference>
<dbReference type="Gene3D" id="2.40.150.20">
    <property type="entry name" value="Ribosomal protein L14"/>
    <property type="match status" value="1"/>
</dbReference>
<dbReference type="HAMAP" id="MF_01367">
    <property type="entry name" value="Ribosomal_uL14"/>
    <property type="match status" value="1"/>
</dbReference>
<dbReference type="InterPro" id="IPR000218">
    <property type="entry name" value="Ribosomal_uL14"/>
</dbReference>
<dbReference type="InterPro" id="IPR005745">
    <property type="entry name" value="Ribosomal_uL14_bac-type"/>
</dbReference>
<dbReference type="InterPro" id="IPR019972">
    <property type="entry name" value="Ribosomal_uL14_CS"/>
</dbReference>
<dbReference type="InterPro" id="IPR036853">
    <property type="entry name" value="Ribosomal_uL14_sf"/>
</dbReference>
<dbReference type="NCBIfam" id="TIGR01067">
    <property type="entry name" value="rplN_bact"/>
    <property type="match status" value="1"/>
</dbReference>
<dbReference type="PANTHER" id="PTHR11761">
    <property type="entry name" value="50S/60S RIBOSOMAL PROTEIN L14/L23"/>
    <property type="match status" value="1"/>
</dbReference>
<dbReference type="PANTHER" id="PTHR11761:SF3">
    <property type="entry name" value="LARGE RIBOSOMAL SUBUNIT PROTEIN UL14M"/>
    <property type="match status" value="1"/>
</dbReference>
<dbReference type="Pfam" id="PF00238">
    <property type="entry name" value="Ribosomal_L14"/>
    <property type="match status" value="1"/>
</dbReference>
<dbReference type="SMART" id="SM01374">
    <property type="entry name" value="Ribosomal_L14"/>
    <property type="match status" value="1"/>
</dbReference>
<dbReference type="SUPFAM" id="SSF50193">
    <property type="entry name" value="Ribosomal protein L14"/>
    <property type="match status" value="1"/>
</dbReference>
<dbReference type="PROSITE" id="PS00049">
    <property type="entry name" value="RIBOSOMAL_L14"/>
    <property type="match status" value="1"/>
</dbReference>
<keyword id="KW-0687">Ribonucleoprotein</keyword>
<keyword id="KW-0689">Ribosomal protein</keyword>
<keyword id="KW-0694">RNA-binding</keyword>
<keyword id="KW-0699">rRNA-binding</keyword>
<proteinExistence type="inferred from homology"/>
<feature type="chain" id="PRO_1000055697" description="Large ribosomal subunit protein uL14">
    <location>
        <begin position="1"/>
        <end position="122"/>
    </location>
</feature>
<comment type="function">
    <text evidence="1">Binds to 23S rRNA. Forms part of two intersubunit bridges in the 70S ribosome.</text>
</comment>
<comment type="subunit">
    <text evidence="1">Part of the 50S ribosomal subunit. Forms a cluster with proteins L3 and L19. In the 70S ribosome, L14 and L19 interact and together make contacts with the 16S rRNA in bridges B5 and B8.</text>
</comment>
<comment type="similarity">
    <text evidence="1">Belongs to the universal ribosomal protein uL14 family.</text>
</comment>
<accession>A6WHT8</accession>
<gene>
    <name evidence="1" type="primary">rplN</name>
    <name type="ordered locus">Shew185_0206</name>
</gene>
<sequence length="122" mass="13456">MIQMQSTLDVACNSGARRVQCIKVLGGSHRRYAGIGDIIKVSVKEAIPRAKAKKGDVYNAVVVRTKKGVRRPDGSVIRFDRNAAVLLNNNLQPIGTRIFGPVTRELRNEQFMKIVSLAPEVL</sequence>
<protein>
    <recommendedName>
        <fullName evidence="1">Large ribosomal subunit protein uL14</fullName>
    </recommendedName>
    <alternativeName>
        <fullName evidence="2">50S ribosomal protein L14</fullName>
    </alternativeName>
</protein>